<evidence type="ECO:0000250" key="1"/>
<evidence type="ECO:0000256" key="2">
    <source>
        <dbReference type="SAM" id="MobiDB-lite"/>
    </source>
</evidence>
<evidence type="ECO:0000305" key="3"/>
<gene>
    <name type="primary">HTB1</name>
    <name type="ordered locus">AGR183C</name>
</gene>
<keyword id="KW-0007">Acetylation</keyword>
<keyword id="KW-0158">Chromosome</keyword>
<keyword id="KW-0238">DNA-binding</keyword>
<keyword id="KW-1017">Isopeptide bond</keyword>
<keyword id="KW-0544">Nucleosome core</keyword>
<keyword id="KW-0539">Nucleus</keyword>
<keyword id="KW-0597">Phosphoprotein</keyword>
<keyword id="KW-1185">Reference proteome</keyword>
<keyword id="KW-0832">Ubl conjugation</keyword>
<dbReference type="EMBL" id="AE016820">
    <property type="protein sequence ID" value="AAS54673.1"/>
    <property type="molecule type" value="Genomic_DNA"/>
</dbReference>
<dbReference type="RefSeq" id="NP_986849.1">
    <property type="nucleotide sequence ID" value="NM_211911.1"/>
</dbReference>
<dbReference type="SMR" id="Q74ZL5"/>
<dbReference type="STRING" id="284811.Q74ZL5"/>
<dbReference type="EnsemblFungi" id="AAS54673">
    <property type="protein sequence ID" value="AAS54673"/>
    <property type="gene ID" value="AGOS_AGR183C"/>
</dbReference>
<dbReference type="GeneID" id="4623151"/>
<dbReference type="KEGG" id="ago:AGOS_AGR183C"/>
<dbReference type="eggNOG" id="KOG1744">
    <property type="taxonomic scope" value="Eukaryota"/>
</dbReference>
<dbReference type="HOGENOM" id="CLU_075666_1_3_1"/>
<dbReference type="InParanoid" id="Q74ZL5"/>
<dbReference type="OMA" id="PLVCHIS"/>
<dbReference type="OrthoDB" id="10254238at2759"/>
<dbReference type="Proteomes" id="UP000000591">
    <property type="component" value="Chromosome VII"/>
</dbReference>
<dbReference type="GO" id="GO:0000786">
    <property type="term" value="C:nucleosome"/>
    <property type="evidence" value="ECO:0007669"/>
    <property type="project" value="UniProtKB-KW"/>
</dbReference>
<dbReference type="GO" id="GO:0005634">
    <property type="term" value="C:nucleus"/>
    <property type="evidence" value="ECO:0007669"/>
    <property type="project" value="UniProtKB-SubCell"/>
</dbReference>
<dbReference type="GO" id="GO:0003677">
    <property type="term" value="F:DNA binding"/>
    <property type="evidence" value="ECO:0000318"/>
    <property type="project" value="GO_Central"/>
</dbReference>
<dbReference type="GO" id="GO:0046982">
    <property type="term" value="F:protein heterodimerization activity"/>
    <property type="evidence" value="ECO:0007669"/>
    <property type="project" value="InterPro"/>
</dbReference>
<dbReference type="GO" id="GO:0030527">
    <property type="term" value="F:structural constituent of chromatin"/>
    <property type="evidence" value="ECO:0007669"/>
    <property type="project" value="InterPro"/>
</dbReference>
<dbReference type="CDD" id="cd22910">
    <property type="entry name" value="HFD_H2B"/>
    <property type="match status" value="1"/>
</dbReference>
<dbReference type="FunFam" id="1.10.20.10:FF:000014">
    <property type="entry name" value="Histone H2B"/>
    <property type="match status" value="1"/>
</dbReference>
<dbReference type="Gene3D" id="1.10.20.10">
    <property type="entry name" value="Histone, subunit A"/>
    <property type="match status" value="1"/>
</dbReference>
<dbReference type="InterPro" id="IPR009072">
    <property type="entry name" value="Histone-fold"/>
</dbReference>
<dbReference type="InterPro" id="IPR007125">
    <property type="entry name" value="Histone_H2A/H2B/H3"/>
</dbReference>
<dbReference type="InterPro" id="IPR000558">
    <property type="entry name" value="Histone_H2B"/>
</dbReference>
<dbReference type="InterPro" id="IPR055333">
    <property type="entry name" value="HISTONE_H2B_site"/>
</dbReference>
<dbReference type="PANTHER" id="PTHR23428">
    <property type="entry name" value="HISTONE H2B"/>
    <property type="match status" value="1"/>
</dbReference>
<dbReference type="Pfam" id="PF00125">
    <property type="entry name" value="Histone"/>
    <property type="match status" value="1"/>
</dbReference>
<dbReference type="PRINTS" id="PR00621">
    <property type="entry name" value="HISTONEH2B"/>
</dbReference>
<dbReference type="SMART" id="SM00427">
    <property type="entry name" value="H2B"/>
    <property type="match status" value="1"/>
</dbReference>
<dbReference type="SUPFAM" id="SSF47113">
    <property type="entry name" value="Histone-fold"/>
    <property type="match status" value="1"/>
</dbReference>
<dbReference type="PROSITE" id="PS00357">
    <property type="entry name" value="HISTONE_H2B"/>
    <property type="match status" value="1"/>
</dbReference>
<comment type="function">
    <text>Core component of nucleosome. Nucleosomes wrap and compact DNA into chromatin, limiting DNA accessibility to the cellular machineries which require DNA as a template. Histones thereby play a central role in transcription regulation, DNA repair, DNA replication and chromosomal stability. DNA accessibility is regulated via a complex set of post-translational modifications of histones, also called histone code, and nucleosome remodeling.</text>
</comment>
<comment type="subunit">
    <text>The nucleosome is a histone octamer containing two molecules each of H2A, H2B, H3 and H4 assembled in one H3-H4 heterotetramer and two H2A-H2B heterodimers. The octamer wraps approximately 147 bp of DNA.</text>
</comment>
<comment type="subcellular location">
    <subcellularLocation>
        <location evidence="1">Nucleus</location>
    </subcellularLocation>
    <subcellularLocation>
        <location evidence="1">Chromosome</location>
    </subcellularLocation>
</comment>
<comment type="PTM">
    <text evidence="1">Monoubiquitinated by the UBC2-BRE1 complex to form H2BK123ub1. H2BK123ub1 gives a specific tag for epigenetic transcriptional activation and is also prerequisite for H3K4me and H3K79me formation. H2BK123ub1 also modulates the formation of double-strand breaks during meiosis and is a prerequisite for DNA-damage checkpoint activation (By similarity).</text>
</comment>
<comment type="PTM">
    <text evidence="1">Phosphorylated by STE20 to form H2BS10ph during progression through meiotic prophase. May be correlated with chromosome condensation (By similarity).</text>
</comment>
<comment type="PTM">
    <text evidence="1">Acetylated by GCN5 to form H2BK11ac and H2BK16ac. H2BK16ac can also be formed by ESA1. Acetylation of N-terminal lysines and particularly formation of H2BK11acK16ac has a positive effect on transcription (By similarity).</text>
</comment>
<comment type="PTM">
    <text evidence="1">Sumoylation to form H2BK6su and probably also H2BK16su or H2BK17su, occurs preferentially near the telomeres and represses gene transcription.</text>
</comment>
<comment type="similarity">
    <text evidence="3">Belongs to the histone H2B family.</text>
</comment>
<comment type="caution">
    <text evidence="3">To ensure consistency between histone entries, we follow the 'Brno' nomenclature for histone modifications, with positions referring to those used in the literature for the 'closest' model organism. Due to slight variations in histone sequences between organisms and to the presence of initiator methionine in UniProtKB/Swiss-Prot sequences, the actual positions of modified amino acids in the sequence generally differ. In this entry the following conventions are used: H2BK6ac = acetylated Lys-7; H2BK6su = sumoylated Lys-7; H2BS10ph = phosphorylated Ser-11; H2BK11ac = acetylated Lys-12; H2BK16ac = acetylated Lys-17; H2BK16su = sumoylated Lys-17; H2BK17su = sumoylated Lys-18; H2BK123ub1 = monoubiquitinated Lys-125.</text>
</comment>
<reference key="1">
    <citation type="journal article" date="2004" name="Science">
        <title>The Ashbya gossypii genome as a tool for mapping the ancient Saccharomyces cerevisiae genome.</title>
        <authorList>
            <person name="Dietrich F.S."/>
            <person name="Voegeli S."/>
            <person name="Brachat S."/>
            <person name="Lerch A."/>
            <person name="Gates K."/>
            <person name="Steiner S."/>
            <person name="Mohr C."/>
            <person name="Poehlmann R."/>
            <person name="Luedi P."/>
            <person name="Choi S."/>
            <person name="Wing R.A."/>
            <person name="Flavier A."/>
            <person name="Gaffney T.D."/>
            <person name="Philippsen P."/>
        </authorList>
    </citation>
    <scope>NUCLEOTIDE SEQUENCE [LARGE SCALE GENOMIC DNA]</scope>
    <source>
        <strain>ATCC 10895 / CBS 109.51 / FGSC 9923 / NRRL Y-1056</strain>
    </source>
</reference>
<reference key="2">
    <citation type="journal article" date="2013" name="G3 (Bethesda)">
        <title>Genomes of Ashbya fungi isolated from insects reveal four mating-type loci, numerous translocations, lack of transposons, and distinct gene duplications.</title>
        <authorList>
            <person name="Dietrich F.S."/>
            <person name="Voegeli S."/>
            <person name="Kuo S."/>
            <person name="Philippsen P."/>
        </authorList>
    </citation>
    <scope>GENOME REANNOTATION</scope>
    <source>
        <strain>ATCC 10895 / CBS 109.51 / FGSC 9923 / NRRL Y-1056</strain>
    </source>
</reference>
<protein>
    <recommendedName>
        <fullName>Histone H2B.1</fullName>
    </recommendedName>
</protein>
<accession>Q74ZL5</accession>
<organism>
    <name type="scientific">Eremothecium gossypii (strain ATCC 10895 / CBS 109.51 / FGSC 9923 / NRRL Y-1056)</name>
    <name type="common">Yeast</name>
    <name type="synonym">Ashbya gossypii</name>
    <dbReference type="NCBI Taxonomy" id="284811"/>
    <lineage>
        <taxon>Eukaryota</taxon>
        <taxon>Fungi</taxon>
        <taxon>Dikarya</taxon>
        <taxon>Ascomycota</taxon>
        <taxon>Saccharomycotina</taxon>
        <taxon>Saccharomycetes</taxon>
        <taxon>Saccharomycetales</taxon>
        <taxon>Saccharomycetaceae</taxon>
        <taxon>Eremothecium</taxon>
    </lineage>
</organism>
<feature type="initiator methionine" description="Removed" evidence="1">
    <location>
        <position position="1"/>
    </location>
</feature>
<feature type="chain" id="PRO_0000071928" description="Histone H2B.1">
    <location>
        <begin position="2"/>
        <end position="132"/>
    </location>
</feature>
<feature type="region of interest" description="Disordered" evidence="2">
    <location>
        <begin position="1"/>
        <end position="40"/>
    </location>
</feature>
<feature type="compositionally biased region" description="Low complexity" evidence="2">
    <location>
        <begin position="1"/>
        <end position="13"/>
    </location>
</feature>
<feature type="modified residue" description="N6-acetyllysine; alternate" evidence="1">
    <location>
        <position position="7"/>
    </location>
</feature>
<feature type="modified residue" description="Phosphoserine" evidence="1">
    <location>
        <position position="11"/>
    </location>
</feature>
<feature type="modified residue" description="N6-acetyllysine" evidence="1">
    <location>
        <position position="12"/>
    </location>
</feature>
<feature type="modified residue" description="N6-acetyllysine; alternate" evidence="1">
    <location>
        <position position="17"/>
    </location>
</feature>
<feature type="cross-link" description="Glycyl lysine isopeptide (Lys-Gly) (interchain with G-Cter in SUMO); alternate" evidence="1">
    <location>
        <position position="7"/>
    </location>
</feature>
<feature type="cross-link" description="Glycyl lysine isopeptide (Lys-Gly) (interchain with G-Cter in SUMO); alternate" evidence="1">
    <location>
        <position position="17"/>
    </location>
</feature>
<feature type="cross-link" description="Glycyl lysine isopeptide (Lys-Gly) (interchain with G-Cter in SUMO)" evidence="1">
    <location>
        <position position="18"/>
    </location>
</feature>
<feature type="cross-link" description="Glycyl lysine isopeptide (Lys-Gly) (interchain with G-Cter in ubiquitin)" evidence="1">
    <location>
        <position position="125"/>
    </location>
</feature>
<proteinExistence type="inferred from homology"/>
<name>H2B1_EREGS</name>
<sequence length="132" mass="14284">MSSKASKAPASKAPAEKKPAAKKTSSSVDASKKRTKTRKETYSSYIYKVLKQTHPDTGISQKSMSILNSFVNDIFERIASEASKLAAYNKKSTISAREIQTAVRLILPGELAKHAVSEGTRAVTKYSSSTQA</sequence>